<evidence type="ECO:0000250" key="1"/>
<evidence type="ECO:0000305" key="2"/>
<evidence type="ECO:0007829" key="3">
    <source>
        <dbReference type="PDB" id="7YML"/>
    </source>
</evidence>
<evidence type="ECO:0007829" key="4">
    <source>
        <dbReference type="PDB" id="8B64"/>
    </source>
</evidence>
<keyword id="KW-0002">3D-structure</keyword>
<keyword id="KW-0076">Bacteriochlorophyll</keyword>
<keyword id="KW-0148">Chlorophyll</keyword>
<keyword id="KW-0157">Chromophore</keyword>
<keyword id="KW-0249">Electron transport</keyword>
<keyword id="KW-0408">Iron</keyword>
<keyword id="KW-0460">Magnesium</keyword>
<keyword id="KW-0472">Membrane</keyword>
<keyword id="KW-0479">Metal-binding</keyword>
<keyword id="KW-0602">Photosynthesis</keyword>
<keyword id="KW-0674">Reaction center</keyword>
<keyword id="KW-0812">Transmembrane</keyword>
<keyword id="KW-1133">Transmembrane helix</keyword>
<keyword id="KW-0813">Transport</keyword>
<dbReference type="EMBL" id="AH000921">
    <property type="protein sequence ID" value="AAA26174.1"/>
    <property type="molecule type" value="Genomic_DNA"/>
</dbReference>
<dbReference type="EMBL" id="Z11165">
    <property type="protein sequence ID" value="CAA77554.1"/>
    <property type="molecule type" value="Genomic_DNA"/>
</dbReference>
<dbReference type="PIR" id="B28771">
    <property type="entry name" value="B28771"/>
</dbReference>
<dbReference type="RefSeq" id="WP_013066437.1">
    <property type="nucleotide sequence ID" value="NZ_VIBE01000010.1"/>
</dbReference>
<dbReference type="PDB" id="7YML">
    <property type="method" value="EM"/>
    <property type="resolution" value="2.60 A"/>
    <property type="chains" value="L=1-282"/>
</dbReference>
<dbReference type="PDB" id="8B64">
    <property type="method" value="EM"/>
    <property type="resolution" value="2.59 A"/>
    <property type="chains" value="L=1-282"/>
</dbReference>
<dbReference type="PDBsum" id="7YML"/>
<dbReference type="PDBsum" id="8B64"/>
<dbReference type="EMDB" id="EMD-15862"/>
<dbReference type="EMDB" id="EMD-33931"/>
<dbReference type="SMR" id="P19057"/>
<dbReference type="GeneID" id="31489639"/>
<dbReference type="OMA" id="WGHGFPY"/>
<dbReference type="GO" id="GO:0030077">
    <property type="term" value="C:plasma membrane light-harvesting complex"/>
    <property type="evidence" value="ECO:0007669"/>
    <property type="project" value="InterPro"/>
</dbReference>
<dbReference type="GO" id="GO:0042717">
    <property type="term" value="C:plasma membrane-derived chromatophore membrane"/>
    <property type="evidence" value="ECO:0007669"/>
    <property type="project" value="UniProtKB-SubCell"/>
</dbReference>
<dbReference type="GO" id="GO:0042314">
    <property type="term" value="F:bacteriochlorophyll binding"/>
    <property type="evidence" value="ECO:0007669"/>
    <property type="project" value="UniProtKB-KW"/>
</dbReference>
<dbReference type="GO" id="GO:0045156">
    <property type="term" value="F:electron transporter, transferring electrons within the cyclic electron transport pathway of photosynthesis activity"/>
    <property type="evidence" value="ECO:0007669"/>
    <property type="project" value="InterPro"/>
</dbReference>
<dbReference type="GO" id="GO:0046872">
    <property type="term" value="F:metal ion binding"/>
    <property type="evidence" value="ECO:0007669"/>
    <property type="project" value="UniProtKB-KW"/>
</dbReference>
<dbReference type="GO" id="GO:0009772">
    <property type="term" value="P:photosynthetic electron transport in photosystem II"/>
    <property type="evidence" value="ECO:0007669"/>
    <property type="project" value="InterPro"/>
</dbReference>
<dbReference type="CDD" id="cd09290">
    <property type="entry name" value="Photo-RC_L"/>
    <property type="match status" value="1"/>
</dbReference>
<dbReference type="Gene3D" id="1.20.85.10">
    <property type="entry name" value="Photosystem II protein D1-like"/>
    <property type="match status" value="2"/>
</dbReference>
<dbReference type="InterPro" id="IPR036854">
    <property type="entry name" value="Photo_II_D1/D2_sf"/>
</dbReference>
<dbReference type="InterPro" id="IPR005871">
    <property type="entry name" value="Photo_RC_L"/>
</dbReference>
<dbReference type="InterPro" id="IPR000484">
    <property type="entry name" value="Photo_RC_L/M"/>
</dbReference>
<dbReference type="InterPro" id="IPR055265">
    <property type="entry name" value="Photo_RC_L/M_CS"/>
</dbReference>
<dbReference type="NCBIfam" id="TIGR01157">
    <property type="entry name" value="pufL"/>
    <property type="match status" value="1"/>
</dbReference>
<dbReference type="Pfam" id="PF00124">
    <property type="entry name" value="Photo_RC"/>
    <property type="match status" value="1"/>
</dbReference>
<dbReference type="PRINTS" id="PR00256">
    <property type="entry name" value="REACTNCENTRE"/>
</dbReference>
<dbReference type="SUPFAM" id="SSF81483">
    <property type="entry name" value="Bacterial photosystem II reaction centre, L and M subunits"/>
    <property type="match status" value="1"/>
</dbReference>
<dbReference type="PROSITE" id="PS00244">
    <property type="entry name" value="REACTION_CENTER"/>
    <property type="match status" value="1"/>
</dbReference>
<reference key="1">
    <citation type="journal article" date="1984" name="Cell">
        <title>Nucleotide and deduced polypeptide sequences of the photosynthetic reaction-center, B870 antenna, and flanking polypeptides from R. capsulata.</title>
        <authorList>
            <person name="Youvan D.C."/>
            <person name="Bylina E.J."/>
            <person name="Alberti M."/>
            <person name="Begusch H."/>
            <person name="Hearst J.E."/>
        </authorList>
    </citation>
    <scope>NUCLEOTIDE SEQUENCE [GENOMIC DNA]</scope>
</reference>
<reference key="2">
    <citation type="journal article" date="1995" name="Proteins">
        <title>Structural model of the photosynthetic reaction center of Rhodobacter capsulatus.</title>
        <authorList>
            <person name="Foloppe N."/>
            <person name="Ferrand M."/>
            <person name="Breton J."/>
            <person name="Smith J.C."/>
        </authorList>
    </citation>
    <scope>3D-STRUCTURE MODELING</scope>
</reference>
<proteinExistence type="evidence at protein level"/>
<feature type="initiator methionine" description="Removed">
    <location>
        <position position="1"/>
    </location>
</feature>
<feature type="chain" id="PRO_0000090403" description="Reaction center protein L chain">
    <location>
        <begin position="2"/>
        <end position="282"/>
    </location>
</feature>
<feature type="transmembrane region" description="Helical">
    <location>
        <begin position="33"/>
        <end position="56"/>
    </location>
</feature>
<feature type="transmembrane region" description="Helical">
    <location>
        <begin position="85"/>
        <end position="113"/>
    </location>
</feature>
<feature type="transmembrane region" description="Helical">
    <location>
        <begin position="116"/>
        <end position="141"/>
    </location>
</feature>
<feature type="transmembrane region" description="Helical">
    <location>
        <begin position="171"/>
        <end position="200"/>
    </location>
</feature>
<feature type="transmembrane region" description="Helical">
    <location>
        <begin position="226"/>
        <end position="252"/>
    </location>
</feature>
<feature type="binding site" description="axial binding residue" evidence="1">
    <location>
        <position position="154"/>
    </location>
    <ligand>
        <name>(7R,8Z)-bacteriochlorophyll b</name>
        <dbReference type="ChEBI" id="CHEBI:30034"/>
    </ligand>
    <ligandPart>
        <name>Mg</name>
        <dbReference type="ChEBI" id="CHEBI:25107"/>
    </ligandPart>
</feature>
<feature type="binding site" description="axial binding residue">
    <location>
        <position position="174"/>
    </location>
    <ligand>
        <name>(7R,8Z)-bacteriochlorophyll b</name>
        <dbReference type="ChEBI" id="CHEBI:30034"/>
    </ligand>
    <ligandPart>
        <name>Mg</name>
        <dbReference type="ChEBI" id="CHEBI:25107"/>
    </ligandPart>
</feature>
<feature type="binding site">
    <location>
        <position position="191"/>
    </location>
    <ligand>
        <name>Fe cation</name>
        <dbReference type="ChEBI" id="CHEBI:24875"/>
    </ligand>
</feature>
<feature type="binding site">
    <location>
        <position position="217"/>
    </location>
    <ligand>
        <name>a ubiquinone</name>
        <dbReference type="ChEBI" id="CHEBI:16389"/>
    </ligand>
</feature>
<feature type="binding site">
    <location>
        <position position="231"/>
    </location>
    <ligand>
        <name>Fe cation</name>
        <dbReference type="ChEBI" id="CHEBI:24875"/>
    </ligand>
</feature>
<feature type="helix" evidence="4">
    <location>
        <begin position="8"/>
        <end position="10"/>
    </location>
</feature>
<feature type="strand" evidence="4">
    <location>
        <begin position="17"/>
        <end position="19"/>
    </location>
</feature>
<feature type="strand" evidence="3">
    <location>
        <begin position="25"/>
        <end position="27"/>
    </location>
</feature>
<feature type="strand" evidence="3">
    <location>
        <begin position="30"/>
        <end position="32"/>
    </location>
</feature>
<feature type="helix" evidence="4">
    <location>
        <begin position="33"/>
        <end position="57"/>
    </location>
</feature>
<feature type="turn" evidence="4">
    <location>
        <begin position="62"/>
        <end position="64"/>
    </location>
</feature>
<feature type="helix" evidence="4">
    <location>
        <begin position="72"/>
        <end position="74"/>
    </location>
</feature>
<feature type="helix" evidence="4">
    <location>
        <begin position="81"/>
        <end position="83"/>
    </location>
</feature>
<feature type="helix" evidence="4">
    <location>
        <begin position="85"/>
        <end position="112"/>
    </location>
</feature>
<feature type="helix" evidence="4">
    <location>
        <begin position="117"/>
        <end position="133"/>
    </location>
</feature>
<feature type="helix" evidence="4">
    <location>
        <begin position="135"/>
        <end position="139"/>
    </location>
</feature>
<feature type="helix" evidence="4">
    <location>
        <begin position="143"/>
        <end position="145"/>
    </location>
</feature>
<feature type="helix" evidence="4">
    <location>
        <begin position="153"/>
        <end position="163"/>
    </location>
</feature>
<feature type="helix" evidence="4">
    <location>
        <begin position="168"/>
        <end position="170"/>
    </location>
</feature>
<feature type="helix" evidence="4">
    <location>
        <begin position="172"/>
        <end position="199"/>
    </location>
</feature>
<feature type="helix" evidence="4">
    <location>
        <begin position="210"/>
        <end position="221"/>
    </location>
</feature>
<feature type="helix" evidence="4">
    <location>
        <begin position="227"/>
        <end position="251"/>
    </location>
</feature>
<feature type="turn" evidence="4">
    <location>
        <begin position="253"/>
        <end position="255"/>
    </location>
</feature>
<feature type="helix" evidence="4">
    <location>
        <begin position="260"/>
        <end position="263"/>
    </location>
</feature>
<feature type="turn" evidence="4">
    <location>
        <begin position="264"/>
        <end position="269"/>
    </location>
</feature>
<feature type="helix" evidence="4">
    <location>
        <begin position="271"/>
        <end position="274"/>
    </location>
</feature>
<feature type="turn" evidence="3">
    <location>
        <begin position="279"/>
        <end position="281"/>
    </location>
</feature>
<name>RCEL_RHOCA</name>
<sequence length="282" mass="31567">MALLSFERKYRVPGGTLIGGSLFDFWVGPFYVGFFGVTTIFFATLGFLLILWGAAMQGTWNPQLISIFPPPVENGLNVAALDKGGLWQVITVCATGAFCSWALREVEICRKLGIGFHIPVAFSMAIFAYLTLVVIRPMMMGSWGYAFPYGIWTHLDWVSNTGYTYGNFHYNPFHMLGISLFFTTAWALAMHGALVLSAANPVKGKTMRTPDHEDTYFRDLMGYSVGTLGIHRLGLLLALNAVFWSACCMLVSGTIYFDLWSDWWYWWVNMPFWADMAGGING</sequence>
<protein>
    <recommendedName>
        <fullName>Reaction center protein L chain</fullName>
    </recommendedName>
    <alternativeName>
        <fullName>Photosynthetic reaction center L subunit</fullName>
    </alternativeName>
</protein>
<comment type="function">
    <text>The reaction center is a membrane-bound complex that mediates the initial photochemical event in the electron transfer process of photosynthesis.</text>
</comment>
<comment type="subunit">
    <text>Reaction center is composed of four bacteriochlorophylls, two bacteriopheophytins, two ubiquinones, one iron, and three highly hydrophobic polypeptide chains (designated L, M, and H).</text>
</comment>
<comment type="subcellular location">
    <subcellularLocation>
        <location>Cellular chromatophore membrane</location>
        <topology>Multi-pass membrane protein</topology>
    </subcellularLocation>
</comment>
<comment type="similarity">
    <text evidence="2">Belongs to the reaction center PufL/M/PsbA/D family.</text>
</comment>
<gene>
    <name type="primary">pufL</name>
</gene>
<organism>
    <name type="scientific">Rhodobacter capsulatus</name>
    <name type="common">Rhodopseudomonas capsulata</name>
    <dbReference type="NCBI Taxonomy" id="1061"/>
    <lineage>
        <taxon>Bacteria</taxon>
        <taxon>Pseudomonadati</taxon>
        <taxon>Pseudomonadota</taxon>
        <taxon>Alphaproteobacteria</taxon>
        <taxon>Rhodobacterales</taxon>
        <taxon>Rhodobacter group</taxon>
        <taxon>Rhodobacter</taxon>
    </lineage>
</organism>
<accession>P19057</accession>